<evidence type="ECO:0000269" key="1">
    <source>
    </source>
</evidence>
<evidence type="ECO:0000269" key="2">
    <source>
    </source>
</evidence>
<evidence type="ECO:0000303" key="3">
    <source>
    </source>
</evidence>
<evidence type="ECO:0000305" key="4"/>
<evidence type="ECO:0000312" key="5">
    <source>
        <dbReference type="EMBL" id="ADV57366.1"/>
    </source>
</evidence>
<evidence type="ECO:0007829" key="6">
    <source>
        <dbReference type="PDB" id="2KUY"/>
    </source>
</evidence>
<evidence type="ECO:0007829" key="7">
    <source>
        <dbReference type="PDB" id="8DFZ"/>
    </source>
</evidence>
<proteinExistence type="evidence at protein level"/>
<feature type="signal peptide" evidence="1">
    <location>
        <begin position="1"/>
        <end position="21"/>
    </location>
</feature>
<feature type="chain" id="PRO_5000706231" description="Bacteriocin glycocin F" evidence="1">
    <location>
        <begin position="22"/>
        <end position="64"/>
    </location>
</feature>
<feature type="glycosylation site" description="O-linked (GlcNAc) serine" evidence="1 2">
    <location>
        <position position="39"/>
    </location>
</feature>
<feature type="glycosylation site" description="S-linked (GlcNAc) cysteine" evidence="1 2">
    <location>
        <position position="64"/>
    </location>
</feature>
<feature type="disulfide bond" evidence="1 2">
    <location>
        <begin position="26"/>
        <end position="49"/>
    </location>
</feature>
<feature type="disulfide bond" evidence="1 2">
    <location>
        <begin position="33"/>
        <end position="42"/>
    </location>
</feature>
<feature type="helix" evidence="6">
    <location>
        <begin position="26"/>
        <end position="31"/>
    </location>
</feature>
<feature type="helix" evidence="7">
    <location>
        <begin position="33"/>
        <end position="35"/>
    </location>
</feature>
<feature type="strand" evidence="6">
    <location>
        <begin position="37"/>
        <end position="40"/>
    </location>
</feature>
<feature type="helix" evidence="6">
    <location>
        <begin position="41"/>
        <end position="50"/>
    </location>
</feature>
<reference evidence="4 5" key="1">
    <citation type="journal article" date="2011" name="FEBS Lett.">
        <title>Cysteine S-glycosylation, a new post-translational modification found in glycopeptide bacteriocins.</title>
        <authorList>
            <person name="Stepper J."/>
            <person name="Shastri S."/>
            <person name="Loo T.S."/>
            <person name="Preston J.C."/>
            <person name="Novak P."/>
            <person name="Man P."/>
            <person name="Moore C.H."/>
            <person name="Havlicek V."/>
            <person name="Patchett M.L."/>
            <person name="Norris G.E."/>
        </authorList>
    </citation>
    <scope>NUCLEOTIDE SEQUENCE [GENOMIC DNA]</scope>
    <scope>PROTEIN SEQUENCE OF 22-64</scope>
    <scope>FUNCTION</scope>
    <scope>SUBCELLULAR LOCATION</scope>
    <scope>MASS SPECTROMETRY</scope>
    <scope>DISULFIDE BONDS</scope>
    <scope>GLYCOSYLATION AT SER-39 AND CYS-64</scope>
    <source>
        <strain evidence="5">KW30</strain>
    </source>
</reference>
<reference evidence="4" key="2">
    <citation type="journal article" date="2011" name="Biochemistry">
        <title>Structural, dynamic, and chemical characterization of a novel s-glycosylated bacteriocin.</title>
        <authorList>
            <person name="Venugopal H."/>
            <person name="Edwards P.J."/>
            <person name="Schwalbe M."/>
            <person name="Claridge J.K."/>
            <person name="Libich D.S."/>
            <person name="Stepper J."/>
            <person name="Loo T."/>
            <person name="Patchett M.L."/>
            <person name="Norris G.E."/>
            <person name="Pascal S.M."/>
        </authorList>
    </citation>
    <scope>STRUCTURE BY NMR</scope>
    <scope>DISULFIDE BONDS</scope>
    <scope>GLYCOSYLATION AT SER-39 AND CYS-64</scope>
    <source>
        <strain evidence="2">KW30</strain>
    </source>
</reference>
<accession>E9K9Z1</accession>
<organism>
    <name type="scientific">Lactiplantibacillus plantarum</name>
    <name type="common">Lactobacillus plantarum</name>
    <dbReference type="NCBI Taxonomy" id="1590"/>
    <lineage>
        <taxon>Bacteria</taxon>
        <taxon>Bacillati</taxon>
        <taxon>Bacillota</taxon>
        <taxon>Bacilli</taxon>
        <taxon>Lactobacillales</taxon>
        <taxon>Lactobacillaceae</taxon>
        <taxon>Lactiplantibacillus</taxon>
    </lineage>
</organism>
<keyword id="KW-0002">3D-structure</keyword>
<keyword id="KW-0044">Antibiotic</keyword>
<keyword id="KW-0929">Antimicrobial</keyword>
<keyword id="KW-0078">Bacteriocin</keyword>
<keyword id="KW-0903">Direct protein sequencing</keyword>
<keyword id="KW-1015">Disulfide bond</keyword>
<keyword id="KW-0325">Glycoprotein</keyword>
<keyword id="KW-0964">Secreted</keyword>
<keyword id="KW-0732">Signal</keyword>
<name>GCCF_LACPN</name>
<gene>
    <name evidence="5" type="primary">gccF</name>
</gene>
<dbReference type="EMBL" id="GU552553">
    <property type="protein sequence ID" value="ADV57366.1"/>
    <property type="molecule type" value="Genomic_DNA"/>
</dbReference>
<dbReference type="RefSeq" id="WP_280948884.1">
    <property type="nucleotide sequence ID" value="NZ_CP123762.1"/>
</dbReference>
<dbReference type="PDB" id="2KUY">
    <property type="method" value="NMR"/>
    <property type="chains" value="A=22-64"/>
</dbReference>
<dbReference type="PDB" id="8DFZ">
    <property type="method" value="NMR"/>
    <property type="chains" value="A=22-64"/>
</dbReference>
<dbReference type="PDBsum" id="2KUY"/>
<dbReference type="PDBsum" id="8DFZ"/>
<dbReference type="BMRB" id="E9K9Z1"/>
<dbReference type="SMR" id="E9K9Z1"/>
<dbReference type="GlyCosmos" id="E9K9Z1">
    <property type="glycosylation" value="2 sites, No reported glycans"/>
</dbReference>
<dbReference type="iPTMnet" id="E9K9Z1"/>
<dbReference type="EvolutionaryTrace" id="E9K9Z1"/>
<dbReference type="GO" id="GO:0005576">
    <property type="term" value="C:extracellular region"/>
    <property type="evidence" value="ECO:0000314"/>
    <property type="project" value="UniProtKB"/>
</dbReference>
<dbReference type="GO" id="GO:0050830">
    <property type="term" value="P:defense response to Gram-positive bacterium"/>
    <property type="evidence" value="ECO:0000314"/>
    <property type="project" value="UniProtKB"/>
</dbReference>
<dbReference type="GO" id="GO:0031640">
    <property type="term" value="P:killing of cells of another organism"/>
    <property type="evidence" value="ECO:0007669"/>
    <property type="project" value="UniProtKB-KW"/>
</dbReference>
<dbReference type="Gene3D" id="6.10.140.1280">
    <property type="match status" value="1"/>
</dbReference>
<dbReference type="NCBIfam" id="NF033417">
    <property type="entry name" value="glycocin_F_RiPP"/>
    <property type="match status" value="1"/>
</dbReference>
<protein>
    <recommendedName>
        <fullName evidence="3">Bacteriocin glycocin F</fullName>
        <shortName evidence="3">GccF</shortName>
    </recommendedName>
</protein>
<sequence length="64" mass="7002">MSKLVKTLTISEISKAQNNGGKPAWCWYTLAMCGAGYDSGTCDYMYSHCFGIKHHSSGSSSYHC</sequence>
<comment type="function">
    <text evidence="1">Has antibacterial activity against L.plantarum ATCC 8014. In purified form, the activity is bacteriostatic (IC(50)=2 nM) rather than bactericidal.</text>
</comment>
<comment type="subcellular location">
    <subcellularLocation>
        <location evidence="1">Secreted</location>
    </subcellularLocation>
</comment>
<comment type="mass spectrometry" mass="5199.049" method="Electrospray" evidence="1">
    <text>Dual Electrospray/MALDI source.</text>
</comment>